<comment type="function">
    <text evidence="1">Bidirectionally degrades single-stranded DNA into large acid-insoluble oligonucleotides, which are then degraded further into small acid-soluble oligonucleotides.</text>
</comment>
<comment type="catalytic activity">
    <reaction evidence="1">
        <text>Exonucleolytic cleavage in either 5'- to 3'- or 3'- to 5'-direction to yield nucleoside 5'-phosphates.</text>
        <dbReference type="EC" id="3.1.11.6"/>
    </reaction>
</comment>
<comment type="subunit">
    <text evidence="1">Heterooligomer composed of large and small subunits.</text>
</comment>
<comment type="subcellular location">
    <subcellularLocation>
        <location evidence="1">Cytoplasm</location>
    </subcellularLocation>
</comment>
<comment type="similarity">
    <text evidence="1">Belongs to the XseB family.</text>
</comment>
<sequence length="86" mass="9958">MQDELFETEKAPQKNTKNAKNAPKKSFEEHAHSLEQAIDRLNDSNLSLKDGMDLYKTAMQELFLAQKLLENAYLEYEKLQTPDKKA</sequence>
<name>EX7S_HELPS</name>
<evidence type="ECO:0000255" key="1">
    <source>
        <dbReference type="HAMAP-Rule" id="MF_00337"/>
    </source>
</evidence>
<evidence type="ECO:0000256" key="2">
    <source>
        <dbReference type="SAM" id="MobiDB-lite"/>
    </source>
</evidence>
<gene>
    <name evidence="1" type="primary">xseB</name>
    <name type="ordered locus">HPSH_07595</name>
</gene>
<protein>
    <recommendedName>
        <fullName evidence="1">Exodeoxyribonuclease 7 small subunit</fullName>
        <ecNumber evidence="1">3.1.11.6</ecNumber>
    </recommendedName>
    <alternativeName>
        <fullName evidence="1">Exodeoxyribonuclease VII small subunit</fullName>
        <shortName evidence="1">Exonuclease VII small subunit</shortName>
    </alternativeName>
</protein>
<reference key="1">
    <citation type="submission" date="2008-05" db="EMBL/GenBank/DDBJ databases">
        <title>Genome sequence of Helicobacter pylori from the remote Amazon: traces of Asian ancestry of the first Americans.</title>
        <authorList>
            <person name="Kersulyte D."/>
            <person name="Kalia A."/>
            <person name="Gilman R.H."/>
            <person name="Berg D.E."/>
        </authorList>
    </citation>
    <scope>NUCLEOTIDE SEQUENCE [LARGE SCALE GENOMIC DNA]</scope>
    <source>
        <strain>Shi470</strain>
    </source>
</reference>
<proteinExistence type="inferred from homology"/>
<keyword id="KW-0963">Cytoplasm</keyword>
<keyword id="KW-0269">Exonuclease</keyword>
<keyword id="KW-0378">Hydrolase</keyword>
<keyword id="KW-0540">Nuclease</keyword>
<dbReference type="EC" id="3.1.11.6" evidence="1"/>
<dbReference type="EMBL" id="CP001072">
    <property type="protein sequence ID" value="ACD48910.1"/>
    <property type="molecule type" value="Genomic_DNA"/>
</dbReference>
<dbReference type="RefSeq" id="WP_001150289.1">
    <property type="nucleotide sequence ID" value="NC_010698.2"/>
</dbReference>
<dbReference type="SMR" id="B2UVM8"/>
<dbReference type="KEGG" id="hps:HPSH_07595"/>
<dbReference type="HOGENOM" id="CLU_145918_6_0_7"/>
<dbReference type="GO" id="GO:0005737">
    <property type="term" value="C:cytoplasm"/>
    <property type="evidence" value="ECO:0007669"/>
    <property type="project" value="UniProtKB-SubCell"/>
</dbReference>
<dbReference type="GO" id="GO:0009318">
    <property type="term" value="C:exodeoxyribonuclease VII complex"/>
    <property type="evidence" value="ECO:0007669"/>
    <property type="project" value="InterPro"/>
</dbReference>
<dbReference type="GO" id="GO:0008855">
    <property type="term" value="F:exodeoxyribonuclease VII activity"/>
    <property type="evidence" value="ECO:0007669"/>
    <property type="project" value="UniProtKB-UniRule"/>
</dbReference>
<dbReference type="GO" id="GO:0006308">
    <property type="term" value="P:DNA catabolic process"/>
    <property type="evidence" value="ECO:0007669"/>
    <property type="project" value="UniProtKB-UniRule"/>
</dbReference>
<dbReference type="Gene3D" id="1.10.287.1040">
    <property type="entry name" value="Exonuclease VII, small subunit"/>
    <property type="match status" value="1"/>
</dbReference>
<dbReference type="HAMAP" id="MF_00337">
    <property type="entry name" value="Exonuc_7_S"/>
    <property type="match status" value="1"/>
</dbReference>
<dbReference type="InterPro" id="IPR003761">
    <property type="entry name" value="Exonuc_VII_S"/>
</dbReference>
<dbReference type="InterPro" id="IPR037004">
    <property type="entry name" value="Exonuc_VII_ssu_sf"/>
</dbReference>
<dbReference type="NCBIfam" id="NF010668">
    <property type="entry name" value="PRK14065.1"/>
    <property type="match status" value="1"/>
</dbReference>
<dbReference type="NCBIfam" id="TIGR01280">
    <property type="entry name" value="xseB"/>
    <property type="match status" value="1"/>
</dbReference>
<dbReference type="Pfam" id="PF02609">
    <property type="entry name" value="Exonuc_VII_S"/>
    <property type="match status" value="1"/>
</dbReference>
<dbReference type="SUPFAM" id="SSF116842">
    <property type="entry name" value="XseB-like"/>
    <property type="match status" value="1"/>
</dbReference>
<feature type="chain" id="PRO_1000205227" description="Exodeoxyribonuclease 7 small subunit">
    <location>
        <begin position="1"/>
        <end position="86"/>
    </location>
</feature>
<feature type="region of interest" description="Disordered" evidence="2">
    <location>
        <begin position="1"/>
        <end position="26"/>
    </location>
</feature>
<accession>B2UVM8</accession>
<organism>
    <name type="scientific">Helicobacter pylori (strain Shi470)</name>
    <dbReference type="NCBI Taxonomy" id="512562"/>
    <lineage>
        <taxon>Bacteria</taxon>
        <taxon>Pseudomonadati</taxon>
        <taxon>Campylobacterota</taxon>
        <taxon>Epsilonproteobacteria</taxon>
        <taxon>Campylobacterales</taxon>
        <taxon>Helicobacteraceae</taxon>
        <taxon>Helicobacter</taxon>
    </lineage>
</organism>